<keyword id="KW-0150">Chloroplast</keyword>
<keyword id="KW-0520">NAD</keyword>
<keyword id="KW-0521">NADP</keyword>
<keyword id="KW-0560">Oxidoreductase</keyword>
<keyword id="KW-0934">Plastid</keyword>
<keyword id="KW-1185">Reference proteome</keyword>
<keyword id="KW-0809">Transit peptide</keyword>
<dbReference type="EC" id="1.3.1.105" evidence="3"/>
<dbReference type="RefSeq" id="NP_001296292.1">
    <property type="nucleotide sequence ID" value="NM_001309363.1"/>
</dbReference>
<dbReference type="SMR" id="K4BW79"/>
<dbReference type="FunCoup" id="K4BW79">
    <property type="interactions" value="597"/>
</dbReference>
<dbReference type="STRING" id="4081.K4BW79"/>
<dbReference type="PaxDb" id="4081-Solyc05g005480.2.1"/>
<dbReference type="GeneID" id="101250690"/>
<dbReference type="KEGG" id="sly:101250690"/>
<dbReference type="eggNOG" id="KOG1198">
    <property type="taxonomic scope" value="Eukaryota"/>
</dbReference>
<dbReference type="HOGENOM" id="CLU_026673_3_3_1"/>
<dbReference type="InParanoid" id="K4BW79"/>
<dbReference type="OrthoDB" id="48317at2759"/>
<dbReference type="PhylomeDB" id="K4BW79"/>
<dbReference type="Proteomes" id="UP000004994">
    <property type="component" value="Unplaced"/>
</dbReference>
<dbReference type="ExpressionAtlas" id="K4BW79">
    <property type="expression patterns" value="baseline and differential"/>
</dbReference>
<dbReference type="GO" id="GO:0009507">
    <property type="term" value="C:chloroplast"/>
    <property type="evidence" value="ECO:0007669"/>
    <property type="project" value="UniProtKB-SubCell"/>
</dbReference>
<dbReference type="GO" id="GO:0102978">
    <property type="term" value="F:furaneol oxidoreductase activity"/>
    <property type="evidence" value="ECO:0007669"/>
    <property type="project" value="UniProtKB-EC"/>
</dbReference>
<dbReference type="GO" id="GO:0008270">
    <property type="term" value="F:zinc ion binding"/>
    <property type="evidence" value="ECO:0007669"/>
    <property type="project" value="InterPro"/>
</dbReference>
<dbReference type="GO" id="GO:0009820">
    <property type="term" value="P:alkaloid metabolic process"/>
    <property type="evidence" value="ECO:0007669"/>
    <property type="project" value="UniProtKB-ARBA"/>
</dbReference>
<dbReference type="CDD" id="cd05289">
    <property type="entry name" value="MDR_like_2"/>
    <property type="match status" value="1"/>
</dbReference>
<dbReference type="Gene3D" id="3.90.180.10">
    <property type="entry name" value="Medium-chain alcohol dehydrogenases, catalytic domain"/>
    <property type="match status" value="1"/>
</dbReference>
<dbReference type="Gene3D" id="3.40.50.720">
    <property type="entry name" value="NAD(P)-binding Rossmann-like Domain"/>
    <property type="match status" value="1"/>
</dbReference>
<dbReference type="InterPro" id="IPR013154">
    <property type="entry name" value="ADH-like_N"/>
</dbReference>
<dbReference type="InterPro" id="IPR044626">
    <property type="entry name" value="AOR-like"/>
</dbReference>
<dbReference type="InterPro" id="IPR011032">
    <property type="entry name" value="GroES-like_sf"/>
</dbReference>
<dbReference type="InterPro" id="IPR036291">
    <property type="entry name" value="NAD(P)-bd_dom_sf"/>
</dbReference>
<dbReference type="InterPro" id="IPR020843">
    <property type="entry name" value="PKS_ER"/>
</dbReference>
<dbReference type="InterPro" id="IPR002364">
    <property type="entry name" value="Quin_OxRdtase/zeta-crystal_CS"/>
</dbReference>
<dbReference type="PANTHER" id="PTHR44573">
    <property type="entry name" value="NADPH-DEPENDENT ALKENAL/ONE OXIDOREDUCTASE, CHLOROPLASTIC"/>
    <property type="match status" value="1"/>
</dbReference>
<dbReference type="PANTHER" id="PTHR44573:SF1">
    <property type="entry name" value="NADPH-DEPENDENT ALKENAL_ONE OXIDOREDUCTASE, CHLOROPLASTIC"/>
    <property type="match status" value="1"/>
</dbReference>
<dbReference type="Pfam" id="PF08240">
    <property type="entry name" value="ADH_N"/>
    <property type="match status" value="1"/>
</dbReference>
<dbReference type="Pfam" id="PF13602">
    <property type="entry name" value="ADH_zinc_N_2"/>
    <property type="match status" value="1"/>
</dbReference>
<dbReference type="SMART" id="SM00829">
    <property type="entry name" value="PKS_ER"/>
    <property type="match status" value="1"/>
</dbReference>
<dbReference type="SUPFAM" id="SSF50129">
    <property type="entry name" value="GroES-like"/>
    <property type="match status" value="1"/>
</dbReference>
<dbReference type="SUPFAM" id="SSF51735">
    <property type="entry name" value="NAD(P)-binding Rossmann-fold domains"/>
    <property type="match status" value="1"/>
</dbReference>
<dbReference type="PROSITE" id="PS01162">
    <property type="entry name" value="QOR_ZETA_CRYSTAL"/>
    <property type="match status" value="1"/>
</dbReference>
<feature type="transit peptide" description="Chloroplast" evidence="2">
    <location>
        <begin position="1"/>
        <end position="60"/>
    </location>
</feature>
<feature type="chain" id="PRO_0000428658" description="2-methylene-furan-3-one reductase">
    <location>
        <begin position="61"/>
        <end position="388"/>
    </location>
</feature>
<feature type="binding site" evidence="1">
    <location>
        <position position="125"/>
    </location>
    <ligand>
        <name>NADP(+)</name>
        <dbReference type="ChEBI" id="CHEBI:58349"/>
    </ligand>
</feature>
<feature type="binding site" evidence="1">
    <location>
        <position position="125"/>
    </location>
    <ligand>
        <name>substrate</name>
    </ligand>
</feature>
<feature type="binding site" evidence="1">
    <location>
        <begin position="240"/>
        <end position="241"/>
    </location>
    <ligand>
        <name>NADP(+)</name>
        <dbReference type="ChEBI" id="CHEBI:58349"/>
    </ligand>
</feature>
<feature type="binding site" evidence="1">
    <location>
        <begin position="263"/>
        <end position="266"/>
    </location>
    <ligand>
        <name>NADP(+)</name>
        <dbReference type="ChEBI" id="CHEBI:58349"/>
    </ligand>
</feature>
<feature type="binding site" evidence="1">
    <location>
        <position position="281"/>
    </location>
    <ligand>
        <name>NADP(+)</name>
        <dbReference type="ChEBI" id="CHEBI:58349"/>
    </ligand>
</feature>
<feature type="binding site" evidence="1">
    <location>
        <begin position="330"/>
        <end position="332"/>
    </location>
    <ligand>
        <name>NADP(+)</name>
        <dbReference type="ChEBI" id="CHEBI:58349"/>
    </ligand>
</feature>
<feature type="binding site" evidence="1">
    <location>
        <begin position="377"/>
        <end position="378"/>
    </location>
    <ligand>
        <name>NADP(+)</name>
        <dbReference type="ChEBI" id="CHEBI:58349"/>
    </ligand>
</feature>
<organism>
    <name type="scientific">Solanum lycopersicum</name>
    <name type="common">Tomato</name>
    <name type="synonym">Lycopersicon esculentum</name>
    <dbReference type="NCBI Taxonomy" id="4081"/>
    <lineage>
        <taxon>Eukaryota</taxon>
        <taxon>Viridiplantae</taxon>
        <taxon>Streptophyta</taxon>
        <taxon>Embryophyta</taxon>
        <taxon>Tracheophyta</taxon>
        <taxon>Spermatophyta</taxon>
        <taxon>Magnoliopsida</taxon>
        <taxon>eudicotyledons</taxon>
        <taxon>Gunneridae</taxon>
        <taxon>Pentapetalae</taxon>
        <taxon>asterids</taxon>
        <taxon>lamiids</taxon>
        <taxon>Solanales</taxon>
        <taxon>Solanaceae</taxon>
        <taxon>Solanoideae</taxon>
        <taxon>Solaneae</taxon>
        <taxon>Solanum</taxon>
        <taxon>Solanum subgen. Lycopersicon</taxon>
    </lineage>
</organism>
<accession>K4BW79</accession>
<evidence type="ECO:0000250" key="1"/>
<evidence type="ECO:0000255" key="2"/>
<evidence type="ECO:0000269" key="3">
    <source>
    </source>
</evidence>
<evidence type="ECO:0000305" key="4"/>
<reference key="1">
    <citation type="journal article" date="2012" name="Nature">
        <title>The tomato genome sequence provides insights into fleshy fruit evolution.</title>
        <authorList>
            <consortium name="Tomato Genome Consortium"/>
        </authorList>
    </citation>
    <scope>NUCLEOTIDE SEQUENCE [LARGE SCALE GENOMIC DNA]</scope>
    <source>
        <strain>cv. Heinz 1706</strain>
    </source>
</reference>
<reference key="2">
    <citation type="journal article" date="2006" name="Plant Cell">
        <title>FaQR, required for the biosynthesis of the strawberry flavor compound 4-hydroxy-2,5-dimethyl-3(2H)-furanone, encodes an enone oxidoreductase.</title>
        <authorList>
            <person name="Raab T."/>
            <person name="Lopez-Raez J.A."/>
            <person name="Klein D."/>
            <person name="Caballero J.L."/>
            <person name="Moyano E."/>
            <person name="Schwab W."/>
            <person name="Munoz-Blanco J."/>
        </authorList>
    </citation>
    <scope>IDENTIFICATION</scope>
    <scope>FUNCTION</scope>
    <scope>CATALYTIC ACTIVITY</scope>
    <scope>BIOPHYSICOCHEMICAL PROPERTIES</scope>
    <scope>SUBSTRATE SPECIFICITY</scope>
</reference>
<protein>
    <recommendedName>
        <fullName>2-methylene-furan-3-one reductase</fullName>
        <ecNumber evidence="3">1.3.1.105</ecNumber>
    </recommendedName>
    <alternativeName>
        <fullName>Enone oxidoreductase</fullName>
        <shortName>SlEO</shortName>
    </alternativeName>
</protein>
<comment type="function">
    <text evidence="3">Enone oxidoreductase involved in the biosynthesis of 4-hydroxy-2,5-dimethyl-3(2H)-furanone (HDMF or furaneol). Can use both NADH and NADPH as the electron donor.</text>
</comment>
<comment type="catalytic activity">
    <reaction evidence="3">
        <text>4-hydroxy-2,5-dimethyl-furan-3(2H)-one + NADP(+) = 4-hydroxy-5-methyl-2-methylenefuran-3(2H)-one + NADPH + H(+)</text>
        <dbReference type="Rhea" id="RHEA:39111"/>
        <dbReference type="ChEBI" id="CHEBI:15378"/>
        <dbReference type="ChEBI" id="CHEBI:57783"/>
        <dbReference type="ChEBI" id="CHEBI:58349"/>
        <dbReference type="ChEBI" id="CHEBI:76245"/>
        <dbReference type="ChEBI" id="CHEBI:76247"/>
        <dbReference type="EC" id="1.3.1.105"/>
    </reaction>
</comment>
<comment type="biophysicochemical properties">
    <kinetics>
        <KM evidence="3">1.59 mM for (2E)-2-ethylidene-4-hydroxy-5-methyl-3(2H)-furanone (EDHMF)</KM>
        <KM evidence="3">2.41 mM for (2E)-4-hydroxy-5-methyl-2-propylidene-3(2H)-furanone (HMPDF)</KM>
        <KM evidence="3">1.13 mM for (2E)-2-butylidene-4-hydroxy-5-methyl- 3(2H)-furanone (BDHMF)</KM>
        <text>kcat is 0.39 sec(-1) with EDHMF as substrate. kcat is 0.34 sec(-1) with HMPDF as substrate. kcat is 0.15 sec(-1) with BDHMF as substrate.</text>
    </kinetics>
</comment>
<comment type="subunit">
    <text evidence="1">Monomer.</text>
</comment>
<comment type="subcellular location">
    <subcellularLocation>
        <location evidence="4">Plastid</location>
        <location evidence="4">Chloroplast</location>
    </subcellularLocation>
</comment>
<comment type="similarity">
    <text evidence="4">Belongs to the zinc-containing alcohol dehydrogenase family. Quinone oxidoreductase subfamily.</text>
</comment>
<gene>
    <name type="primary">EO</name>
    <name type="synonym">QR</name>
    <name type="ordered locus">Solyc05g005480</name>
</gene>
<name>ENOX_SOLLC</name>
<sequence>MEALLSSTTLQLKPLHPPSSFSSLHSPFSSISVLRVKGSKKAETFIQRSNFSTVLPLRVSASSQAAAAETSTSISIPSEMKAWSYTDYGSVDVLKLESNVAVPDIKEDQVLIKIVAAALNPVDFKRRLGKFKATDSPLPTVPGYDVAGVVVKVGSQVKGLKEGDEVYGDIHEKALDGPKQFGSLAEYTAVEEKLVALKPKNLSFAEAAALPLAIETAYEGLEKAGFSSGKSILVLGGAGGVGSLVIQLAKHVFGASKVAATSSTGKLELLKSLGADLAIDYTKENFEDLPDKFDVVYDSVGQGEKAVKVVKEGGSVVVLTGAVTPPGFRFVVTSNGEMLKKLNPYLESGKVKPVIDPKGPFSFDKVVDAFSYLETGRATGKVVIHPIP</sequence>
<proteinExistence type="evidence at protein level"/>